<comment type="function">
    <text evidence="1">Required for cytoplasm to vacuole transport (Cvt) and autophagy as a part of the autophagy-specific VPS34 PI3-kinase complex I (By similarity). This complex is essential to recruit the ATG8-phosphatidylinositol conjugate and the ATG12-ATG5 conjugate to the pre-autophagosomal structure (By similarity). ATG14 mediates the specific binding of the VPS34 PI3-kinase complex I to the preautophagosomal structure (PAS) (By similarity).</text>
</comment>
<comment type="subunit">
    <text evidence="1">Component of the autophagy-specific VPS34 PI3-kinase complex I (By similarity).</text>
</comment>
<comment type="subcellular location">
    <subcellularLocation>
        <location evidence="1">Preautophagosomal structure membrane</location>
        <topology evidence="1">Peripheral membrane protein</topology>
    </subcellularLocation>
    <subcellularLocation>
        <location evidence="1">Vacuole membrane</location>
        <topology evidence="1">Peripheral membrane protein</topology>
    </subcellularLocation>
</comment>
<comment type="domain">
    <text evidence="1">Coiled-Coils at the N-terminal half are essential for autophagy (By similarity).</text>
</comment>
<comment type="disruption phenotype">
    <text evidence="3">Still forms preautophagosomal structures (PAS) in proximity to the vacuolar membrane (PubMed:26442587).</text>
</comment>
<comment type="miscellaneous">
    <text evidence="3">Kluyveromyces marxianus proteins are shorter in length and have a more ordered secondary structure than their S.cerevisiae counterparts, which might contribute to the superior thermotolerance and solubility (PubMed:26442587). K.marxianus could be therefore useful as a new model organism for further elucidation of the molecular details of autophagy (PubMed:26442587).</text>
</comment>
<comment type="similarity">
    <text evidence="5">Belongs to the ATG14 family.</text>
</comment>
<proteinExistence type="inferred from homology"/>
<protein>
    <recommendedName>
        <fullName evidence="4">Autophagy-related protein 14</fullName>
    </recommendedName>
</protein>
<gene>
    <name evidence="4" type="primary">ATG14</name>
    <name type="ORF">KLMA_20709</name>
</gene>
<sequence>MIHCGICGKAKTADVQFICCHCINGSPAVLLRDKMNLLILRQEVEQLKTAVEDQLETGFAGEGQLGRQLQKLDIYNEKRRLIKLRQRLQLARNKVQLKRNKYNELLQIMSTNGYLEESTSATDSIDLEEQAAEESASLDTLSHILARNQKQLFAELCRWFRIRKSDEDDVFSYTIWGLPMVNLKNGSELDPSIMVSSMRYLQQYLQLAFRIWLFKAICDKPIENDRNIIENFTQLIYDTLDILRARKLVSKSVSIRDILIRYDLDGMIYHLSQNKYLSSLDDASNSYPPTMQNIKQLVMSMIPSI</sequence>
<reference key="1">
    <citation type="journal article" date="2015" name="Biotechnol. Biofuels">
        <title>Genetic basis of the highly efficient yeast Kluyveromyces marxianus: complete genome sequence and transcriptome analyses.</title>
        <authorList>
            <person name="Lertwattanasakul N."/>
            <person name="Kosaka T."/>
            <person name="Hosoyama A."/>
            <person name="Suzuki Y."/>
            <person name="Rodrussamee N."/>
            <person name="Matsutani M."/>
            <person name="Murata M."/>
            <person name="Fujimoto N."/>
            <person name="Suprayogi X."/>
            <person name="Tsuchikane K."/>
            <person name="Limtong S."/>
            <person name="Fujita N."/>
            <person name="Yamada M."/>
        </authorList>
    </citation>
    <scope>NUCLEOTIDE SEQUENCE [LARGE SCALE GENOMIC DNA]</scope>
    <source>
        <strain>DMKU3-1042 / BCC 29191 / NBRC 104275</strain>
    </source>
</reference>
<reference key="2">
    <citation type="journal article" date="2015" name="J. Biol. Chem.">
        <title>The thermotolerant yeast Kluyveromyces marxianus is a useful organism for structural and biochemical studies of autophagy.</title>
        <authorList>
            <person name="Yamamoto H."/>
            <person name="Shima T."/>
            <person name="Yamaguchi M."/>
            <person name="Mochizuki Y."/>
            <person name="Hoshida H."/>
            <person name="Kakuta S."/>
            <person name="Kondo-Kakuta C."/>
            <person name="Noda N.N."/>
            <person name="Inagaki F."/>
            <person name="Itoh T."/>
            <person name="Akada R."/>
            <person name="Ohsumi Y."/>
        </authorList>
    </citation>
    <scope>IDENTIFICATION</scope>
    <scope>DISRUPTION PHENOTYPE</scope>
</reference>
<feature type="chain" id="PRO_0000443911" description="Autophagy-related protein 14">
    <location>
        <begin position="1"/>
        <end position="305"/>
    </location>
</feature>
<feature type="coiled-coil region" evidence="2">
    <location>
        <begin position="34"/>
        <end position="147"/>
    </location>
</feature>
<dbReference type="EMBL" id="AP012214">
    <property type="protein sequence ID" value="BAO39167.1"/>
    <property type="molecule type" value="Genomic_DNA"/>
</dbReference>
<dbReference type="RefSeq" id="XP_022675025.1">
    <property type="nucleotide sequence ID" value="XM_022818348.1"/>
</dbReference>
<dbReference type="SMR" id="W0T6B6"/>
<dbReference type="GeneID" id="34715170"/>
<dbReference type="VEuPathDB" id="FungiDB:KLMA_20709"/>
<dbReference type="OrthoDB" id="4068791at2759"/>
<dbReference type="Proteomes" id="UP000065495">
    <property type="component" value="Chromosome 2"/>
</dbReference>
<dbReference type="GO" id="GO:0034045">
    <property type="term" value="C:phagophore assembly site membrane"/>
    <property type="evidence" value="ECO:0007669"/>
    <property type="project" value="UniProtKB-SubCell"/>
</dbReference>
<dbReference type="GO" id="GO:0032991">
    <property type="term" value="C:protein-containing complex"/>
    <property type="evidence" value="ECO:0007669"/>
    <property type="project" value="UniProtKB-ARBA"/>
</dbReference>
<dbReference type="GO" id="GO:0005774">
    <property type="term" value="C:vacuolar membrane"/>
    <property type="evidence" value="ECO:0007669"/>
    <property type="project" value="UniProtKB-SubCell"/>
</dbReference>
<dbReference type="GO" id="GO:0016236">
    <property type="term" value="P:macroautophagy"/>
    <property type="evidence" value="ECO:0007669"/>
    <property type="project" value="InterPro"/>
</dbReference>
<dbReference type="GO" id="GO:0015031">
    <property type="term" value="P:protein transport"/>
    <property type="evidence" value="ECO:0007669"/>
    <property type="project" value="UniProtKB-KW"/>
</dbReference>
<dbReference type="InterPro" id="IPR023261">
    <property type="entry name" value="Autophagy-related_protein_14"/>
</dbReference>
<dbReference type="InterPro" id="IPR018791">
    <property type="entry name" value="UV_resistance/autophagy_Atg14"/>
</dbReference>
<dbReference type="Pfam" id="PF10186">
    <property type="entry name" value="ATG14"/>
    <property type="match status" value="1"/>
</dbReference>
<dbReference type="PRINTS" id="PR02030">
    <property type="entry name" value="AUTOPHGYRP14"/>
</dbReference>
<keyword id="KW-0072">Autophagy</keyword>
<keyword id="KW-0175">Coiled coil</keyword>
<keyword id="KW-0472">Membrane</keyword>
<keyword id="KW-0653">Protein transport</keyword>
<keyword id="KW-0813">Transport</keyword>
<keyword id="KW-0926">Vacuole</keyword>
<name>ATG14_KLUMD</name>
<evidence type="ECO:0000250" key="1">
    <source>
        <dbReference type="UniProtKB" id="P38270"/>
    </source>
</evidence>
<evidence type="ECO:0000255" key="2"/>
<evidence type="ECO:0000269" key="3">
    <source>
    </source>
</evidence>
<evidence type="ECO:0000303" key="4">
    <source>
    </source>
</evidence>
<evidence type="ECO:0000305" key="5"/>
<accession>W0T6B6</accession>
<organism>
    <name type="scientific">Kluyveromyces marxianus (strain DMKU3-1042 / BCC 29191 / NBRC 104275)</name>
    <name type="common">Yeast</name>
    <name type="synonym">Candida kefyr</name>
    <dbReference type="NCBI Taxonomy" id="1003335"/>
    <lineage>
        <taxon>Eukaryota</taxon>
        <taxon>Fungi</taxon>
        <taxon>Dikarya</taxon>
        <taxon>Ascomycota</taxon>
        <taxon>Saccharomycotina</taxon>
        <taxon>Saccharomycetes</taxon>
        <taxon>Saccharomycetales</taxon>
        <taxon>Saccharomycetaceae</taxon>
        <taxon>Kluyveromyces</taxon>
    </lineage>
</organism>